<comment type="function">
    <text evidence="1">Catalyzes the hydrolysis of methenyl-H(4)MPT(+) to 5-formyl-H(4)MPT.</text>
</comment>
<comment type="catalytic activity">
    <reaction>
        <text>5,10-methenyl-5,6,7,8-tetrahydromethanopterin + H2O = N(5)-formyl-5,6,7,8-tetrahydromethanopterin + H(+)</text>
        <dbReference type="Rhea" id="RHEA:19053"/>
        <dbReference type="ChEBI" id="CHEBI:15377"/>
        <dbReference type="ChEBI" id="CHEBI:15378"/>
        <dbReference type="ChEBI" id="CHEBI:58018"/>
        <dbReference type="ChEBI" id="CHEBI:58337"/>
        <dbReference type="EC" id="3.5.4.27"/>
    </reaction>
</comment>
<comment type="pathway">
    <text>One-carbon metabolism; formaldehyde degradation; formate from formaldehyde (H(4)MPT route): step 3/5.</text>
</comment>
<comment type="subcellular location">
    <subcellularLocation>
        <location evidence="1">Cytoplasm</location>
    </subcellularLocation>
</comment>
<comment type="similarity">
    <text evidence="2">Belongs to the MCH family.</text>
</comment>
<feature type="chain" id="PRO_0000140887" description="Methenyltetrahydromethanopterin cyclohydrolase">
    <location>
        <begin position="1" status="less than"/>
        <end position="132" status="greater than"/>
    </location>
</feature>
<feature type="non-terminal residue">
    <location>
        <position position="1"/>
    </location>
</feature>
<feature type="non-terminal residue">
    <location>
        <position position="132"/>
    </location>
</feature>
<accession>Q9RPW4</accession>
<dbReference type="EC" id="3.5.4.27"/>
<dbReference type="EMBL" id="AF142653">
    <property type="protein sequence ID" value="AAD55903.1"/>
    <property type="molecule type" value="Genomic_DNA"/>
</dbReference>
<dbReference type="SMR" id="Q9RPW4"/>
<dbReference type="UniPathway" id="UPA00562">
    <property type="reaction ID" value="UER00703"/>
</dbReference>
<dbReference type="GO" id="GO:0005737">
    <property type="term" value="C:cytoplasm"/>
    <property type="evidence" value="ECO:0007669"/>
    <property type="project" value="UniProtKB-SubCell"/>
</dbReference>
<dbReference type="GO" id="GO:0018759">
    <property type="term" value="F:methenyltetrahydromethanopterin cyclohydrolase activity"/>
    <property type="evidence" value="ECO:0007669"/>
    <property type="project" value="UniProtKB-EC"/>
</dbReference>
<dbReference type="GO" id="GO:0046294">
    <property type="term" value="P:formaldehyde catabolic process"/>
    <property type="evidence" value="ECO:0007669"/>
    <property type="project" value="UniProtKB-UniPathway"/>
</dbReference>
<dbReference type="GO" id="GO:0006730">
    <property type="term" value="P:one-carbon metabolic process"/>
    <property type="evidence" value="ECO:0007669"/>
    <property type="project" value="UniProtKB-KW"/>
</dbReference>
<dbReference type="Gene3D" id="3.10.340.11">
    <property type="entry name" value="Methenyltetrahydromethanopterin Cyclohydrolase, Chain A, domain 1"/>
    <property type="match status" value="1"/>
</dbReference>
<dbReference type="Gene3D" id="3.30.1030.10">
    <property type="entry name" value="Methenyltetrahydromethanopterin Cyclohydrolase, Chain A, domain 2"/>
    <property type="match status" value="1"/>
</dbReference>
<dbReference type="InterPro" id="IPR003209">
    <property type="entry name" value="METHMP_CycHdrlase"/>
</dbReference>
<dbReference type="Pfam" id="PF02289">
    <property type="entry name" value="MCH"/>
    <property type="match status" value="1"/>
</dbReference>
<dbReference type="SUPFAM" id="SSF56199">
    <property type="entry name" value="Methenyltetrahydromethanopterin cyclohydrolase"/>
    <property type="match status" value="1"/>
</dbReference>
<protein>
    <recommendedName>
        <fullName>Methenyltetrahydromethanopterin cyclohydrolase</fullName>
        <ecNumber>3.5.4.27</ecNumber>
    </recommendedName>
    <alternativeName>
        <fullName>Methenyl-H4MPT cyclohydrolase</fullName>
    </alternativeName>
</protein>
<proteinExistence type="inferred from homology"/>
<evidence type="ECO:0000250" key="1"/>
<evidence type="ECO:0000305" key="2"/>
<gene>
    <name type="primary">mch</name>
</gene>
<organism>
    <name type="scientific">Methylomicrobium album</name>
    <name type="common">Methylobacter albus</name>
    <dbReference type="NCBI Taxonomy" id="39775"/>
    <lineage>
        <taxon>Bacteria</taxon>
        <taxon>Pseudomonadati</taxon>
        <taxon>Pseudomonadota</taxon>
        <taxon>Gammaproteobacteria</taxon>
        <taxon>Methylococcales</taxon>
        <taxon>Methylococcaceae</taxon>
        <taxon>Methylomicrobium</taxon>
    </lineage>
</organism>
<reference key="1">
    <citation type="journal article" date="1999" name="J. Bacteriol.">
        <title>Distribution of tetrahydromethanopterin-dependent enzymes in methylotrophic bacteria and phylogeny of methenyl tetrahydromethanopterin cyclohydrolases.</title>
        <authorList>
            <person name="Vorholt J.A."/>
            <person name="Chistoserdova L.V."/>
            <person name="Stolyar S.M."/>
            <person name="Thauer R.K."/>
            <person name="Lidstrom M.E."/>
        </authorList>
    </citation>
    <scope>NUCLEOTIDE SEQUENCE [GENOMIC DNA]</scope>
    <source>
        <strain>BG8</strain>
    </source>
</reference>
<sequence length="132" mass="14001">SLSHEKYYALGSGPARAMAAKIKDGNEEPVEELYKELGYRDSFDSTVLVIENDAVPPPAIVEKVAAACKVDPGKLTVIVTPTSSLAGGLQVVARVLEVAMHKAHALHFPLENIVDGFGSAPLCPPHPNFVKA</sequence>
<name>MCH_METAL</name>
<keyword id="KW-0963">Cytoplasm</keyword>
<keyword id="KW-0378">Hydrolase</keyword>
<keyword id="KW-0554">One-carbon metabolism</keyword>